<evidence type="ECO:0000269" key="1">
    <source ref="2"/>
</evidence>
<evidence type="ECO:0000305" key="2"/>
<evidence type="ECO:0007829" key="3">
    <source>
        <dbReference type="PDB" id="2WSC"/>
    </source>
</evidence>
<evidence type="ECO:0007829" key="4">
    <source>
        <dbReference type="PDB" id="3LW5"/>
    </source>
</evidence>
<evidence type="ECO:0007829" key="5">
    <source>
        <dbReference type="PDB" id="6LY5"/>
    </source>
</evidence>
<gene>
    <name type="primary">PSAF</name>
</gene>
<protein>
    <recommendedName>
        <fullName>Photosystem I reaction center subunit III, chloroplastic</fullName>
    </recommendedName>
    <alternativeName>
        <fullName>Light-harvesting complex I 17 kDa protein</fullName>
    </alternativeName>
    <alternativeName>
        <fullName>PSI-F</fullName>
    </alternativeName>
</protein>
<name>PSAF_SPIOL</name>
<feature type="transit peptide" description="Chloroplast" evidence="1">
    <location>
        <begin position="1"/>
        <end position="77"/>
    </location>
</feature>
<feature type="chain" id="PRO_0000029346" description="Photosystem I reaction center subunit III, chloroplastic">
    <location>
        <begin position="78"/>
        <end position="231"/>
    </location>
</feature>
<feature type="helix" evidence="5">
    <location>
        <begin position="79"/>
        <end position="81"/>
    </location>
</feature>
<feature type="helix" evidence="5">
    <location>
        <begin position="85"/>
        <end position="87"/>
    </location>
</feature>
<feature type="helix" evidence="5">
    <location>
        <begin position="89"/>
        <end position="106"/>
    </location>
</feature>
<feature type="helix" evidence="5">
    <location>
        <begin position="114"/>
        <end position="136"/>
    </location>
</feature>
<feature type="strand" evidence="4">
    <location>
        <begin position="142"/>
        <end position="144"/>
    </location>
</feature>
<feature type="strand" evidence="5">
    <location>
        <begin position="146"/>
        <end position="148"/>
    </location>
</feature>
<feature type="strand" evidence="3">
    <location>
        <begin position="151"/>
        <end position="155"/>
    </location>
</feature>
<feature type="helix" evidence="5">
    <location>
        <begin position="157"/>
        <end position="159"/>
    </location>
</feature>
<feature type="helix" evidence="5">
    <location>
        <begin position="161"/>
        <end position="184"/>
    </location>
</feature>
<feature type="strand" evidence="5">
    <location>
        <begin position="187"/>
        <end position="189"/>
    </location>
</feature>
<feature type="helix" evidence="5">
    <location>
        <begin position="193"/>
        <end position="196"/>
    </location>
</feature>
<feature type="helix" evidence="5">
    <location>
        <begin position="200"/>
        <end position="207"/>
    </location>
</feature>
<feature type="helix" evidence="5">
    <location>
        <begin position="208"/>
        <end position="212"/>
    </location>
</feature>
<feature type="helix" evidence="5">
    <location>
        <begin position="213"/>
        <end position="221"/>
    </location>
</feature>
<feature type="strand" evidence="5">
    <location>
        <begin position="224"/>
        <end position="227"/>
    </location>
</feature>
<feature type="helix" evidence="3">
    <location>
        <begin position="228"/>
        <end position="230"/>
    </location>
</feature>
<keyword id="KW-0002">3D-structure</keyword>
<keyword id="KW-0150">Chloroplast</keyword>
<keyword id="KW-0903">Direct protein sequencing</keyword>
<keyword id="KW-0602">Photosynthesis</keyword>
<keyword id="KW-0603">Photosystem I</keyword>
<keyword id="KW-0934">Plastid</keyword>
<keyword id="KW-1185">Reference proteome</keyword>
<keyword id="KW-0793">Thylakoid</keyword>
<keyword id="KW-0809">Transit peptide</keyword>
<organism>
    <name type="scientific">Spinacia oleracea</name>
    <name type="common">Spinach</name>
    <dbReference type="NCBI Taxonomy" id="3562"/>
    <lineage>
        <taxon>Eukaryota</taxon>
        <taxon>Viridiplantae</taxon>
        <taxon>Streptophyta</taxon>
        <taxon>Embryophyta</taxon>
        <taxon>Tracheophyta</taxon>
        <taxon>Spermatophyta</taxon>
        <taxon>Magnoliopsida</taxon>
        <taxon>eudicotyledons</taxon>
        <taxon>Gunneridae</taxon>
        <taxon>Pentapetalae</taxon>
        <taxon>Caryophyllales</taxon>
        <taxon>Chenopodiaceae</taxon>
        <taxon>Chenopodioideae</taxon>
        <taxon>Anserineae</taxon>
        <taxon>Spinacia</taxon>
    </lineage>
</organism>
<dbReference type="EMBL" id="X13133">
    <property type="protein sequence ID" value="CAA31523.1"/>
    <property type="molecule type" value="mRNA"/>
</dbReference>
<dbReference type="PIR" id="S00451">
    <property type="entry name" value="F1SP3"/>
</dbReference>
<dbReference type="PDB" id="2O01">
    <property type="method" value="X-ray"/>
    <property type="resolution" value="3.40 A"/>
    <property type="chains" value="F=78-231"/>
</dbReference>
<dbReference type="PDB" id="2WSC">
    <property type="method" value="X-ray"/>
    <property type="resolution" value="3.30 A"/>
    <property type="chains" value="F=1-231"/>
</dbReference>
<dbReference type="PDB" id="2WSE">
    <property type="method" value="X-ray"/>
    <property type="resolution" value="3.49 A"/>
    <property type="chains" value="F=1-231"/>
</dbReference>
<dbReference type="PDB" id="2WSF">
    <property type="method" value="X-ray"/>
    <property type="resolution" value="3.48 A"/>
    <property type="chains" value="F=1-231"/>
</dbReference>
<dbReference type="PDB" id="3LW5">
    <property type="method" value="X-ray"/>
    <property type="resolution" value="3.30 A"/>
    <property type="chains" value="F=78-231"/>
</dbReference>
<dbReference type="PDB" id="4XK8">
    <property type="method" value="X-ray"/>
    <property type="resolution" value="2.80 A"/>
    <property type="chains" value="F/f=78-228"/>
</dbReference>
<dbReference type="PDB" id="6LY5">
    <property type="method" value="EM"/>
    <property type="resolution" value="2.38 A"/>
    <property type="chains" value="f=78-228"/>
</dbReference>
<dbReference type="PDB" id="9GRX">
    <property type="method" value="EM"/>
    <property type="resolution" value="3.19 A"/>
    <property type="chains" value="f=78-230"/>
</dbReference>
<dbReference type="PDBsum" id="2O01"/>
<dbReference type="PDBsum" id="2WSC"/>
<dbReference type="PDBsum" id="2WSE"/>
<dbReference type="PDBsum" id="2WSF"/>
<dbReference type="PDBsum" id="3LW5"/>
<dbReference type="PDBsum" id="4XK8"/>
<dbReference type="PDBsum" id="6LY5"/>
<dbReference type="PDBsum" id="9GRX"/>
<dbReference type="EMDB" id="EMD-51527"/>
<dbReference type="SMR" id="P12355"/>
<dbReference type="DIP" id="DIP-61659N"/>
<dbReference type="IntAct" id="P12355">
    <property type="interactions" value="2"/>
</dbReference>
<dbReference type="MINT" id="P12355"/>
<dbReference type="OrthoDB" id="1920411at2759"/>
<dbReference type="EvolutionaryTrace" id="P12355"/>
<dbReference type="Proteomes" id="UP001155700">
    <property type="component" value="Unplaced"/>
</dbReference>
<dbReference type="GO" id="GO:0009543">
    <property type="term" value="C:chloroplast thylakoid lumen"/>
    <property type="evidence" value="ECO:0007669"/>
    <property type="project" value="UniProtKB-SubCell"/>
</dbReference>
<dbReference type="GO" id="GO:0009535">
    <property type="term" value="C:chloroplast thylakoid membrane"/>
    <property type="evidence" value="ECO:0007669"/>
    <property type="project" value="TreeGrafter"/>
</dbReference>
<dbReference type="GO" id="GO:0009538">
    <property type="term" value="C:photosystem I reaction center"/>
    <property type="evidence" value="ECO:0007669"/>
    <property type="project" value="InterPro"/>
</dbReference>
<dbReference type="GO" id="GO:0051219">
    <property type="term" value="F:phosphoprotein binding"/>
    <property type="evidence" value="ECO:0000353"/>
    <property type="project" value="CAFA"/>
</dbReference>
<dbReference type="GO" id="GO:0015979">
    <property type="term" value="P:photosynthesis"/>
    <property type="evidence" value="ECO:0007669"/>
    <property type="project" value="UniProtKB-KW"/>
</dbReference>
<dbReference type="DisProt" id="DP00990"/>
<dbReference type="FunFam" id="1.10.8.110:FF:000001">
    <property type="entry name" value="Photosystem I reaction center subunit III"/>
    <property type="match status" value="1"/>
</dbReference>
<dbReference type="Gene3D" id="1.10.8.110">
    <property type="entry name" value="Photosystem I PsaF, reaction centre subunit III"/>
    <property type="match status" value="1"/>
</dbReference>
<dbReference type="InterPro" id="IPR003666">
    <property type="entry name" value="PSI_PsaF"/>
</dbReference>
<dbReference type="InterPro" id="IPR036577">
    <property type="entry name" value="PSI_PsaF_sf"/>
</dbReference>
<dbReference type="PANTHER" id="PTHR34939">
    <property type="entry name" value="PHOTOSYSTEM I REACTION CENTER SUBUNIT III, CHLOROPLASTIC"/>
    <property type="match status" value="1"/>
</dbReference>
<dbReference type="PANTHER" id="PTHR34939:SF1">
    <property type="entry name" value="PHOTOSYSTEM I REACTION CENTER SUBUNIT III, CHLOROPLASTIC"/>
    <property type="match status" value="1"/>
</dbReference>
<dbReference type="Pfam" id="PF02507">
    <property type="entry name" value="PSI_PsaF"/>
    <property type="match status" value="1"/>
</dbReference>
<dbReference type="SUPFAM" id="SSF81536">
    <property type="entry name" value="Subunit III of photosystem I reaction centre, PsaF"/>
    <property type="match status" value="1"/>
</dbReference>
<reference key="1">
    <citation type="journal article" date="1988" name="FEBS Lett.">
        <title>Nucleotide sequence of cDNA clones encoding the entire precursor polypeptides for subunits IV and V of the photosystem I reaction center from spinach.</title>
        <authorList>
            <person name="Steppuhn J."/>
            <person name="Hermans J."/>
            <person name="Nechushtai R."/>
            <person name="Ljungberg U."/>
            <person name="Thuemmler F."/>
            <person name="Lottspeich F."/>
            <person name="Herrmann R.G."/>
        </authorList>
    </citation>
    <scope>NUCLEOTIDE SEQUENCE [MRNA]</scope>
</reference>
<reference key="2">
    <citation type="journal article" date="1989" name="FEBS Lett.">
        <title>Identification of the plastocyanin binding subunit of photosystem I.</title>
        <authorList>
            <person name="Hippler M."/>
            <person name="Ratajczak R."/>
            <person name="Haehnel W."/>
        </authorList>
    </citation>
    <scope>PROTEIN SEQUENCE OF 78-91</scope>
</reference>
<sequence>MSFTIPTNLYKPLATKPKHLSSSSFAPRSKIVCQQENDQQQPKKLELAKVGANAAAALALSSVLLSSWSVAPDAAMADIAGLTPCKESKQFAKREKQALKKLQASLKLYADDSAPALAIKATMEKTKKRFDNYGKYGLLCGSDGLPHLIVSGDQRHWGEFITPGILFLYIAGWIGWVGRSYLIAIRDEKKPTQKEIIIDVPLASSLLFRGFSWPVAAYRELLNGELVDNNF</sequence>
<proteinExistence type="evidence at protein level"/>
<comment type="function">
    <text>Probably participates in efficiency of electron transfer from plastocyanin to P700 (or cytochrome c553 in algae and cyanobacteria). This plastocyanin-docking protein contributes to the specific association of plastocyanin to PSI.</text>
</comment>
<comment type="subcellular location">
    <subcellularLocation>
        <location>Plastid</location>
        <location>Chloroplast thylakoid lumen</location>
    </subcellularLocation>
</comment>
<comment type="similarity">
    <text evidence="2">Belongs to the PsaF family.</text>
</comment>
<accession>P12355</accession>